<organism>
    <name type="scientific">Symbiobacterium thermophilum (strain DSM 24528 / JCM 14929 / IAM 14863 / T)</name>
    <dbReference type="NCBI Taxonomy" id="292459"/>
    <lineage>
        <taxon>Bacteria</taxon>
        <taxon>Bacillati</taxon>
        <taxon>Bacillota</taxon>
        <taxon>Clostridia</taxon>
        <taxon>Eubacteriales</taxon>
        <taxon>Symbiobacteriaceae</taxon>
        <taxon>Symbiobacterium</taxon>
    </lineage>
</organism>
<name>RL23_SYMTH</name>
<accession>Q67JU5</accession>
<comment type="function">
    <text evidence="1">One of the early assembly proteins it binds 23S rRNA. One of the proteins that surrounds the polypeptide exit tunnel on the outside of the ribosome. Forms the main docking site for trigger factor binding to the ribosome.</text>
</comment>
<comment type="subunit">
    <text evidence="1">Part of the 50S ribosomal subunit. Contacts protein L29, and trigger factor when it is bound to the ribosome.</text>
</comment>
<comment type="similarity">
    <text evidence="1">Belongs to the universal ribosomal protein uL23 family.</text>
</comment>
<reference key="1">
    <citation type="journal article" date="2004" name="Nucleic Acids Res.">
        <title>Genome sequence of Symbiobacterium thermophilum, an uncultivable bacterium that depends on microbial commensalism.</title>
        <authorList>
            <person name="Ueda K."/>
            <person name="Yamashita A."/>
            <person name="Ishikawa J."/>
            <person name="Shimada M."/>
            <person name="Watsuji T."/>
            <person name="Morimura K."/>
            <person name="Ikeda H."/>
            <person name="Hattori M."/>
            <person name="Beppu T."/>
        </authorList>
    </citation>
    <scope>NUCLEOTIDE SEQUENCE [LARGE SCALE GENOMIC DNA]</scope>
    <source>
        <strain>DSM 24528 / JCM 14929 / IAM 14863 / T</strain>
    </source>
</reference>
<sequence length="94" mass="10808">MEARDIILKPLITEKSVAKMSEGKYAFKVRLDANKTQIKQAIEEIFGVTVVRVNTMRVRGKLRRQGKYIGRRSDWKKAIVQLKEGDSIKVFEGL</sequence>
<proteinExistence type="inferred from homology"/>
<keyword id="KW-1185">Reference proteome</keyword>
<keyword id="KW-0687">Ribonucleoprotein</keyword>
<keyword id="KW-0689">Ribosomal protein</keyword>
<keyword id="KW-0694">RNA-binding</keyword>
<keyword id="KW-0699">rRNA-binding</keyword>
<feature type="chain" id="PRO_0000272854" description="Large ribosomal subunit protein uL23">
    <location>
        <begin position="1"/>
        <end position="94"/>
    </location>
</feature>
<protein>
    <recommendedName>
        <fullName evidence="1">Large ribosomal subunit protein uL23</fullName>
    </recommendedName>
    <alternativeName>
        <fullName evidence="2">50S ribosomal protein L23</fullName>
    </alternativeName>
</protein>
<gene>
    <name evidence="1" type="primary">rplW</name>
    <name type="ordered locus">STH3073</name>
</gene>
<evidence type="ECO:0000255" key="1">
    <source>
        <dbReference type="HAMAP-Rule" id="MF_01369"/>
    </source>
</evidence>
<evidence type="ECO:0000305" key="2"/>
<dbReference type="EMBL" id="AP006840">
    <property type="protein sequence ID" value="BAD42055.1"/>
    <property type="molecule type" value="Genomic_DNA"/>
</dbReference>
<dbReference type="SMR" id="Q67JU5"/>
<dbReference type="STRING" id="292459.STH3073"/>
<dbReference type="KEGG" id="sth:STH3073"/>
<dbReference type="eggNOG" id="COG0089">
    <property type="taxonomic scope" value="Bacteria"/>
</dbReference>
<dbReference type="HOGENOM" id="CLU_037562_3_2_9"/>
<dbReference type="OrthoDB" id="9793353at2"/>
<dbReference type="Proteomes" id="UP000000417">
    <property type="component" value="Chromosome"/>
</dbReference>
<dbReference type="GO" id="GO:1990904">
    <property type="term" value="C:ribonucleoprotein complex"/>
    <property type="evidence" value="ECO:0007669"/>
    <property type="project" value="UniProtKB-KW"/>
</dbReference>
<dbReference type="GO" id="GO:0005840">
    <property type="term" value="C:ribosome"/>
    <property type="evidence" value="ECO:0007669"/>
    <property type="project" value="UniProtKB-KW"/>
</dbReference>
<dbReference type="GO" id="GO:0019843">
    <property type="term" value="F:rRNA binding"/>
    <property type="evidence" value="ECO:0007669"/>
    <property type="project" value="UniProtKB-UniRule"/>
</dbReference>
<dbReference type="GO" id="GO:0003735">
    <property type="term" value="F:structural constituent of ribosome"/>
    <property type="evidence" value="ECO:0007669"/>
    <property type="project" value="InterPro"/>
</dbReference>
<dbReference type="GO" id="GO:0006412">
    <property type="term" value="P:translation"/>
    <property type="evidence" value="ECO:0007669"/>
    <property type="project" value="UniProtKB-UniRule"/>
</dbReference>
<dbReference type="FunFam" id="3.30.70.330:FF:000001">
    <property type="entry name" value="50S ribosomal protein L23"/>
    <property type="match status" value="1"/>
</dbReference>
<dbReference type="Gene3D" id="3.30.70.330">
    <property type="match status" value="1"/>
</dbReference>
<dbReference type="HAMAP" id="MF_01369_B">
    <property type="entry name" value="Ribosomal_uL23_B"/>
    <property type="match status" value="1"/>
</dbReference>
<dbReference type="InterPro" id="IPR012677">
    <property type="entry name" value="Nucleotide-bd_a/b_plait_sf"/>
</dbReference>
<dbReference type="InterPro" id="IPR013025">
    <property type="entry name" value="Ribosomal_uL23-like"/>
</dbReference>
<dbReference type="InterPro" id="IPR012678">
    <property type="entry name" value="Ribosomal_uL23/eL15/eS24_sf"/>
</dbReference>
<dbReference type="NCBIfam" id="NF004359">
    <property type="entry name" value="PRK05738.1-3"/>
    <property type="match status" value="1"/>
</dbReference>
<dbReference type="NCBIfam" id="NF004363">
    <property type="entry name" value="PRK05738.2-4"/>
    <property type="match status" value="1"/>
</dbReference>
<dbReference type="NCBIfam" id="NF004366">
    <property type="entry name" value="PRK05738.3-2"/>
    <property type="match status" value="1"/>
</dbReference>
<dbReference type="PANTHER" id="PTHR11620">
    <property type="entry name" value="60S RIBOSOMAL PROTEIN L23A"/>
    <property type="match status" value="1"/>
</dbReference>
<dbReference type="Pfam" id="PF00276">
    <property type="entry name" value="Ribosomal_L23"/>
    <property type="match status" value="1"/>
</dbReference>
<dbReference type="SUPFAM" id="SSF54189">
    <property type="entry name" value="Ribosomal proteins S24e, L23 and L15e"/>
    <property type="match status" value="1"/>
</dbReference>